<gene>
    <name type="primary">VRN2</name>
    <name type="ordered locus">At4g16845</name>
    <name type="ORF">dl4450w</name>
    <name type="ORF">FCAALL.23</name>
</gene>
<reference key="1">
    <citation type="journal article" date="2001" name="Cell">
        <title>The VERNALIZATION2 (VRN2) gene mediates the epigenetic regulation of vernalization in Arabidopsis.</title>
        <authorList>
            <person name="Gendall A.R."/>
            <person name="Levy Y.Y."/>
            <person name="Wilson A."/>
            <person name="Dean C."/>
        </authorList>
    </citation>
    <scope>NUCLEOTIDE SEQUENCE [MRNA] (ISOFORMS 1 AND 2)</scope>
    <scope>FUNCTION</scope>
    <scope>CHARACTERIZATION</scope>
    <source>
        <strain>cv. Landsberg erecta</strain>
    </source>
</reference>
<reference key="2">
    <citation type="journal article" date="1998" name="Nature">
        <title>Analysis of 1.9 Mb of contiguous sequence from chromosome 4 of Arabidopsis thaliana.</title>
        <authorList>
            <person name="Bevan M."/>
            <person name="Bancroft I."/>
            <person name="Bent E."/>
            <person name="Love K."/>
            <person name="Goodman H.M."/>
            <person name="Dean C."/>
            <person name="Bergkamp R."/>
            <person name="Dirkse W."/>
            <person name="van Staveren M."/>
            <person name="Stiekema W."/>
            <person name="Drost L."/>
            <person name="Ridley P."/>
            <person name="Hudson S.-A."/>
            <person name="Patel K."/>
            <person name="Murphy G."/>
            <person name="Piffanelli P."/>
            <person name="Wedler H."/>
            <person name="Wedler E."/>
            <person name="Wambutt R."/>
            <person name="Weitzenegger T."/>
            <person name="Pohl T."/>
            <person name="Terryn N."/>
            <person name="Gielen J."/>
            <person name="Villarroel R."/>
            <person name="De Clercq R."/>
            <person name="van Montagu M."/>
            <person name="Lecharny A."/>
            <person name="Aubourg S."/>
            <person name="Gy I."/>
            <person name="Kreis M."/>
            <person name="Lao N."/>
            <person name="Kavanagh T."/>
            <person name="Hempel S."/>
            <person name="Kotter P."/>
            <person name="Entian K.-D."/>
            <person name="Rieger M."/>
            <person name="Schaefer M."/>
            <person name="Funk B."/>
            <person name="Mueller-Auer S."/>
            <person name="Silvey M."/>
            <person name="James R."/>
            <person name="Monfort A."/>
            <person name="Pons A."/>
            <person name="Puigdomenech P."/>
            <person name="Douka A."/>
            <person name="Voukelatou E."/>
            <person name="Milioni D."/>
            <person name="Hatzopoulos P."/>
            <person name="Piravandi E."/>
            <person name="Obermaier B."/>
            <person name="Hilbert H."/>
            <person name="Duesterhoeft A."/>
            <person name="Moores T."/>
            <person name="Jones J.D.G."/>
            <person name="Eneva T."/>
            <person name="Palme K."/>
            <person name="Benes V."/>
            <person name="Rechmann S."/>
            <person name="Ansorge W."/>
            <person name="Cooke R."/>
            <person name="Berger C."/>
            <person name="Delseny M."/>
            <person name="Voet M."/>
            <person name="Volckaert G."/>
            <person name="Mewes H.-W."/>
            <person name="Klosterman S."/>
            <person name="Schueller C."/>
            <person name="Chalwatzis N."/>
        </authorList>
    </citation>
    <scope>NUCLEOTIDE SEQUENCE [LARGE SCALE GENOMIC DNA]</scope>
    <source>
        <strain>cv. Columbia</strain>
    </source>
</reference>
<reference key="3">
    <citation type="journal article" date="1999" name="Nature">
        <title>Sequence and analysis of chromosome 4 of the plant Arabidopsis thaliana.</title>
        <authorList>
            <person name="Mayer K.F.X."/>
            <person name="Schueller C."/>
            <person name="Wambutt R."/>
            <person name="Murphy G."/>
            <person name="Volckaert G."/>
            <person name="Pohl T."/>
            <person name="Duesterhoeft A."/>
            <person name="Stiekema W."/>
            <person name="Entian K.-D."/>
            <person name="Terryn N."/>
            <person name="Harris B."/>
            <person name="Ansorge W."/>
            <person name="Brandt P."/>
            <person name="Grivell L.A."/>
            <person name="Rieger M."/>
            <person name="Weichselgartner M."/>
            <person name="de Simone V."/>
            <person name="Obermaier B."/>
            <person name="Mache R."/>
            <person name="Mueller M."/>
            <person name="Kreis M."/>
            <person name="Delseny M."/>
            <person name="Puigdomenech P."/>
            <person name="Watson M."/>
            <person name="Schmidtheini T."/>
            <person name="Reichert B."/>
            <person name="Portetelle D."/>
            <person name="Perez-Alonso M."/>
            <person name="Boutry M."/>
            <person name="Bancroft I."/>
            <person name="Vos P."/>
            <person name="Hoheisel J."/>
            <person name="Zimmermann W."/>
            <person name="Wedler H."/>
            <person name="Ridley P."/>
            <person name="Langham S.-A."/>
            <person name="McCullagh B."/>
            <person name="Bilham L."/>
            <person name="Robben J."/>
            <person name="van der Schueren J."/>
            <person name="Grymonprez B."/>
            <person name="Chuang Y.-J."/>
            <person name="Vandenbussche F."/>
            <person name="Braeken M."/>
            <person name="Weltjens I."/>
            <person name="Voet M."/>
            <person name="Bastiaens I."/>
            <person name="Aert R."/>
            <person name="Defoor E."/>
            <person name="Weitzenegger T."/>
            <person name="Bothe G."/>
            <person name="Ramsperger U."/>
            <person name="Hilbert H."/>
            <person name="Braun M."/>
            <person name="Holzer E."/>
            <person name="Brandt A."/>
            <person name="Peters S."/>
            <person name="van Staveren M."/>
            <person name="Dirkse W."/>
            <person name="Mooijman P."/>
            <person name="Klein Lankhorst R."/>
            <person name="Rose M."/>
            <person name="Hauf J."/>
            <person name="Koetter P."/>
            <person name="Berneiser S."/>
            <person name="Hempel S."/>
            <person name="Feldpausch M."/>
            <person name="Lamberth S."/>
            <person name="Van den Daele H."/>
            <person name="De Keyser A."/>
            <person name="Buysshaert C."/>
            <person name="Gielen J."/>
            <person name="Villarroel R."/>
            <person name="De Clercq R."/>
            <person name="van Montagu M."/>
            <person name="Rogers J."/>
            <person name="Cronin A."/>
            <person name="Quail M.A."/>
            <person name="Bray-Allen S."/>
            <person name="Clark L."/>
            <person name="Doggett J."/>
            <person name="Hall S."/>
            <person name="Kay M."/>
            <person name="Lennard N."/>
            <person name="McLay K."/>
            <person name="Mayes R."/>
            <person name="Pettett A."/>
            <person name="Rajandream M.A."/>
            <person name="Lyne M."/>
            <person name="Benes V."/>
            <person name="Rechmann S."/>
            <person name="Borkova D."/>
            <person name="Bloecker H."/>
            <person name="Scharfe M."/>
            <person name="Grimm M."/>
            <person name="Loehnert T.-H."/>
            <person name="Dose S."/>
            <person name="de Haan M."/>
            <person name="Maarse A.C."/>
            <person name="Schaefer M."/>
            <person name="Mueller-Auer S."/>
            <person name="Gabel C."/>
            <person name="Fuchs M."/>
            <person name="Fartmann B."/>
            <person name="Granderath K."/>
            <person name="Dauner D."/>
            <person name="Herzl A."/>
            <person name="Neumann S."/>
            <person name="Argiriou A."/>
            <person name="Vitale D."/>
            <person name="Liguori R."/>
            <person name="Piravandi E."/>
            <person name="Massenet O."/>
            <person name="Quigley F."/>
            <person name="Clabauld G."/>
            <person name="Muendlein A."/>
            <person name="Felber R."/>
            <person name="Schnabl S."/>
            <person name="Hiller R."/>
            <person name="Schmidt W."/>
            <person name="Lecharny A."/>
            <person name="Aubourg S."/>
            <person name="Chefdor F."/>
            <person name="Cooke R."/>
            <person name="Berger C."/>
            <person name="Monfort A."/>
            <person name="Casacuberta E."/>
            <person name="Gibbons T."/>
            <person name="Weber N."/>
            <person name="Vandenbol M."/>
            <person name="Bargues M."/>
            <person name="Terol J."/>
            <person name="Torres A."/>
            <person name="Perez-Perez A."/>
            <person name="Purnelle B."/>
            <person name="Bent E."/>
            <person name="Johnson S."/>
            <person name="Tacon D."/>
            <person name="Jesse T."/>
            <person name="Heijnen L."/>
            <person name="Schwarz S."/>
            <person name="Scholler P."/>
            <person name="Heber S."/>
            <person name="Francs P."/>
            <person name="Bielke C."/>
            <person name="Frishman D."/>
            <person name="Haase D."/>
            <person name="Lemcke K."/>
            <person name="Mewes H.-W."/>
            <person name="Stocker S."/>
            <person name="Zaccaria P."/>
            <person name="Bevan M."/>
            <person name="Wilson R.K."/>
            <person name="de la Bastide M."/>
            <person name="Habermann K."/>
            <person name="Parnell L."/>
            <person name="Dedhia N."/>
            <person name="Gnoj L."/>
            <person name="Schutz K."/>
            <person name="Huang E."/>
            <person name="Spiegel L."/>
            <person name="Sekhon M."/>
            <person name="Murray J."/>
            <person name="Sheet P."/>
            <person name="Cordes M."/>
            <person name="Abu-Threideh J."/>
            <person name="Stoneking T."/>
            <person name="Kalicki J."/>
            <person name="Graves T."/>
            <person name="Harmon G."/>
            <person name="Edwards J."/>
            <person name="Latreille P."/>
            <person name="Courtney L."/>
            <person name="Cloud J."/>
            <person name="Abbott A."/>
            <person name="Scott K."/>
            <person name="Johnson D."/>
            <person name="Minx P."/>
            <person name="Bentley D."/>
            <person name="Fulton B."/>
            <person name="Miller N."/>
            <person name="Greco T."/>
            <person name="Kemp K."/>
            <person name="Kramer J."/>
            <person name="Fulton L."/>
            <person name="Mardis E."/>
            <person name="Dante M."/>
            <person name="Pepin K."/>
            <person name="Hillier L.W."/>
            <person name="Nelson J."/>
            <person name="Spieth J."/>
            <person name="Ryan E."/>
            <person name="Andrews S."/>
            <person name="Geisel C."/>
            <person name="Layman D."/>
            <person name="Du H."/>
            <person name="Ali J."/>
            <person name="Berghoff A."/>
            <person name="Jones K."/>
            <person name="Drone K."/>
            <person name="Cotton M."/>
            <person name="Joshu C."/>
            <person name="Antonoiu B."/>
            <person name="Zidanic M."/>
            <person name="Strong C."/>
            <person name="Sun H."/>
            <person name="Lamar B."/>
            <person name="Yordan C."/>
            <person name="Ma P."/>
            <person name="Zhong J."/>
            <person name="Preston R."/>
            <person name="Vil D."/>
            <person name="Shekher M."/>
            <person name="Matero A."/>
            <person name="Shah R."/>
            <person name="Swaby I.K."/>
            <person name="O'Shaughnessy A."/>
            <person name="Rodriguez M."/>
            <person name="Hoffman J."/>
            <person name="Till S."/>
            <person name="Granat S."/>
            <person name="Shohdy N."/>
            <person name="Hasegawa A."/>
            <person name="Hameed A."/>
            <person name="Lodhi M."/>
            <person name="Johnson A."/>
            <person name="Chen E."/>
            <person name="Marra M.A."/>
            <person name="Martienssen R."/>
            <person name="McCombie W.R."/>
        </authorList>
    </citation>
    <scope>NUCLEOTIDE SEQUENCE [LARGE SCALE GENOMIC DNA]</scope>
    <source>
        <strain>cv. Columbia</strain>
    </source>
</reference>
<reference key="4">
    <citation type="journal article" date="2017" name="Plant J.">
        <title>Araport11: a complete reannotation of the Arabidopsis thaliana reference genome.</title>
        <authorList>
            <person name="Cheng C.Y."/>
            <person name="Krishnakumar V."/>
            <person name="Chan A.P."/>
            <person name="Thibaud-Nissen F."/>
            <person name="Schobel S."/>
            <person name="Town C.D."/>
        </authorList>
    </citation>
    <scope>GENOME REANNOTATION</scope>
    <source>
        <strain>cv. Columbia</strain>
    </source>
</reference>
<reference key="5">
    <citation type="journal article" date="2003" name="Science">
        <title>Empirical analysis of transcriptional activity in the Arabidopsis genome.</title>
        <authorList>
            <person name="Yamada K."/>
            <person name="Lim J."/>
            <person name="Dale J.M."/>
            <person name="Chen H."/>
            <person name="Shinn P."/>
            <person name="Palm C.J."/>
            <person name="Southwick A.M."/>
            <person name="Wu H.C."/>
            <person name="Kim C.J."/>
            <person name="Nguyen M."/>
            <person name="Pham P.K."/>
            <person name="Cheuk R.F."/>
            <person name="Karlin-Newmann G."/>
            <person name="Liu S.X."/>
            <person name="Lam B."/>
            <person name="Sakano H."/>
            <person name="Wu T."/>
            <person name="Yu G."/>
            <person name="Miranda M."/>
            <person name="Quach H.L."/>
            <person name="Tripp M."/>
            <person name="Chang C.H."/>
            <person name="Lee J.M."/>
            <person name="Toriumi M.J."/>
            <person name="Chan M.M."/>
            <person name="Tang C.C."/>
            <person name="Onodera C.S."/>
            <person name="Deng J.M."/>
            <person name="Akiyama K."/>
            <person name="Ansari Y."/>
            <person name="Arakawa T."/>
            <person name="Banh J."/>
            <person name="Banno F."/>
            <person name="Bowser L."/>
            <person name="Brooks S.Y."/>
            <person name="Carninci P."/>
            <person name="Chao Q."/>
            <person name="Choy N."/>
            <person name="Enju A."/>
            <person name="Goldsmith A.D."/>
            <person name="Gurjal M."/>
            <person name="Hansen N.F."/>
            <person name="Hayashizaki Y."/>
            <person name="Johnson-Hopson C."/>
            <person name="Hsuan V.W."/>
            <person name="Iida K."/>
            <person name="Karnes M."/>
            <person name="Khan S."/>
            <person name="Koesema E."/>
            <person name="Ishida J."/>
            <person name="Jiang P.X."/>
            <person name="Jones T."/>
            <person name="Kawai J."/>
            <person name="Kamiya A."/>
            <person name="Meyers C."/>
            <person name="Nakajima M."/>
            <person name="Narusaka M."/>
            <person name="Seki M."/>
            <person name="Sakurai T."/>
            <person name="Satou M."/>
            <person name="Tamse R."/>
            <person name="Vaysberg M."/>
            <person name="Wallender E.K."/>
            <person name="Wong C."/>
            <person name="Yamamura Y."/>
            <person name="Yuan S."/>
            <person name="Shinozaki K."/>
            <person name="Davis R.W."/>
            <person name="Theologis A."/>
            <person name="Ecker J.R."/>
        </authorList>
    </citation>
    <scope>NUCLEOTIDE SEQUENCE [LARGE SCALE MRNA] (ISOFORM 1)</scope>
    <source>
        <strain>cv. Columbia</strain>
    </source>
</reference>
<reference key="6">
    <citation type="journal article" date="2008" name="Proc. Natl. Acad. Sci. U.S.A.">
        <title>A PHD-polycomb repressive complex 2 triggers the epigenetic silencing of FLC during vernalization.</title>
        <authorList>
            <person name="De Lucia F."/>
            <person name="Crevillen P."/>
            <person name="Jones A.M.E."/>
            <person name="Greb T."/>
            <person name="Dean C."/>
        </authorList>
    </citation>
    <scope>FUNCTION</scope>
    <scope>SUBUNIT</scope>
    <scope>IDENTIFICATION BY MASS SPECTROMETRY</scope>
</reference>
<reference key="7">
    <citation type="journal article" date="2015" name="PLoS Genet.">
        <title>Kicking against the PRCs - A domesticated transposase antagonises silencing mediated by polycomb group proteins and is an accessory component of polycomb repressive complex 2.</title>
        <authorList>
            <person name="Liang S.C."/>
            <person name="Hartwig B."/>
            <person name="Perera P."/>
            <person name="Mora-Garcia S."/>
            <person name="de Leau E."/>
            <person name="Thornton H."/>
            <person name="de Lima Alves F."/>
            <person name="de Alves F.L."/>
            <person name="Rappsilber J."/>
            <person name="Rapsilber J."/>
            <person name="Yang S."/>
            <person name="James G.V."/>
            <person name="Schneeberger K."/>
            <person name="Finnegan E.J."/>
            <person name="Turck F."/>
            <person name="Goodrich J."/>
        </authorList>
    </citation>
    <scope>INTERACTION WITH ALP1</scope>
</reference>
<name>VRN2_ARATH</name>
<comment type="function">
    <text evidence="4 5">Polycomb group (PcG) protein. Plays a central role in vernalization by maintaining repressed the homeotic gene FLC, a floral repressor, after a cold treatment. PcG proteins act by forming multiprotein complexes, which are required to maintain the transcriptionally repressive state of homeotic genes throughout development. PcG proteins are not required to initiate repression, but to maintain it during later stages of development. They probably act via the methylation of histones, rendering chromatin heritably changed in its expressibility. Associates constitutively along the whole FLC locus.</text>
</comment>
<comment type="subunit">
    <text evidence="1 5 6">Probable component of a PcG complex. In plants, PcG complexes are probably composed of a member of the EZ family (CLF or MEA), FIE, and a member of the VEFS family (FIS2, VRN2 or EMF2) (By similarity). Component of the plant homeodomain / polycomb repressive complex 2 (PHD-PRC2) large complex during prolonged cold, composed of core PRC2 components (VRN2, EZA1, FIE and MSI1), and three related PHD finger proteins (VIL1, VIL2 and VIN3) that mediates histone H3 trimethylation on 'Lys-27' (H3K27me3). Binds to ALP1 (PubMed:26642436).</text>
</comment>
<comment type="interaction">
    <interactant intactId="EBI-2128880">
        <id>Q8W5B1</id>
    </interactant>
    <interactant intactId="EBI-307155">
        <id>P93831</id>
        <label>CLF</label>
    </interactant>
    <organismsDiffer>false</organismsDiffer>
    <experiments>3</experiments>
</comment>
<comment type="interaction">
    <interactant intactId="EBI-2128880">
        <id>Q8W5B1</id>
    </interactant>
    <interactant intactId="EBI-1102047">
        <id>Q9ZSM8</id>
        <label>EZA1</label>
    </interactant>
    <organismsDiffer>false</organismsDiffer>
    <experiments>3</experiments>
</comment>
<comment type="interaction">
    <interactant intactId="EBI-2128880">
        <id>Q8W5B1</id>
    </interactant>
    <interactant intactId="EBI-307146">
        <id>Q9LT47</id>
        <label>FIE</label>
    </interactant>
    <organismsDiffer>false</organismsDiffer>
    <experiments>3</experiments>
</comment>
<comment type="interaction">
    <interactant intactId="EBI-2128880">
        <id>Q8W5B1</id>
    </interactant>
    <interactant intactId="EBI-2358223">
        <id>Q9FIE3</id>
        <label>VIN3</label>
    </interactant>
    <organismsDiffer>false</organismsDiffer>
    <experiments>2</experiments>
</comment>
<comment type="subcellular location">
    <subcellularLocation>
        <location>Nucleus</location>
    </subcellularLocation>
</comment>
<comment type="alternative products">
    <event type="alternative splicing"/>
    <isoform>
        <id>Q8W5B1-1</id>
        <name>1</name>
        <sequence type="displayed"/>
    </isoform>
    <isoform>
        <id>Q8W5B1-2</id>
        <name>2</name>
        <name>VRN2'</name>
        <sequence type="described" ref="VSP_007457 VSP_007458"/>
    </isoform>
</comment>
<comment type="tissue specificity">
    <text>Weakly expressed. Expressed both during, and in the absence of vernalization.</text>
</comment>
<comment type="similarity">
    <text evidence="8">Belongs to the VEFS (VRN2-EMF2-FIS2-SU(Z)12) family.</text>
</comment>
<comment type="sequence caution" evidence="8">
    <conflict type="erroneous gene model prediction">
        <sequence resource="EMBL-CDS" id="CAB10457"/>
    </conflict>
</comment>
<comment type="sequence caution" evidence="8">
    <conflict type="erroneous gene model prediction">
        <sequence resource="EMBL-CDS" id="CAB80955"/>
    </conflict>
</comment>
<organism>
    <name type="scientific">Arabidopsis thaliana</name>
    <name type="common">Mouse-ear cress</name>
    <dbReference type="NCBI Taxonomy" id="3702"/>
    <lineage>
        <taxon>Eukaryota</taxon>
        <taxon>Viridiplantae</taxon>
        <taxon>Streptophyta</taxon>
        <taxon>Embryophyta</taxon>
        <taxon>Tracheophyta</taxon>
        <taxon>Spermatophyta</taxon>
        <taxon>Magnoliopsida</taxon>
        <taxon>eudicotyledons</taxon>
        <taxon>Gunneridae</taxon>
        <taxon>Pentapetalae</taxon>
        <taxon>rosids</taxon>
        <taxon>malvids</taxon>
        <taxon>Brassicales</taxon>
        <taxon>Brassicaceae</taxon>
        <taxon>Camelineae</taxon>
        <taxon>Arabidopsis</taxon>
    </lineage>
</organism>
<evidence type="ECO:0000250" key="1"/>
<evidence type="ECO:0000255" key="2"/>
<evidence type="ECO:0000256" key="3">
    <source>
        <dbReference type="SAM" id="MobiDB-lite"/>
    </source>
</evidence>
<evidence type="ECO:0000269" key="4">
    <source>
    </source>
</evidence>
<evidence type="ECO:0000269" key="5">
    <source>
    </source>
</evidence>
<evidence type="ECO:0000269" key="6">
    <source>
    </source>
</evidence>
<evidence type="ECO:0000303" key="7">
    <source>
    </source>
</evidence>
<evidence type="ECO:0000305" key="8"/>
<dbReference type="EMBL" id="AF284500">
    <property type="protein sequence ID" value="AAL32135.1"/>
    <property type="molecule type" value="mRNA"/>
</dbReference>
<dbReference type="EMBL" id="AF284501">
    <property type="protein sequence ID" value="AAL32136.1"/>
    <property type="molecule type" value="mRNA"/>
</dbReference>
<dbReference type="EMBL" id="Z97342">
    <property type="protein sequence ID" value="CAB10457.1"/>
    <property type="status" value="ALT_SEQ"/>
    <property type="molecule type" value="Genomic_DNA"/>
</dbReference>
<dbReference type="EMBL" id="AL161545">
    <property type="protein sequence ID" value="CAB80955.1"/>
    <property type="status" value="ALT_SEQ"/>
    <property type="molecule type" value="Genomic_DNA"/>
</dbReference>
<dbReference type="EMBL" id="CP002687">
    <property type="protein sequence ID" value="AEE83814.1"/>
    <property type="molecule type" value="Genomic_DNA"/>
</dbReference>
<dbReference type="EMBL" id="AY034902">
    <property type="protein sequence ID" value="AAK59409.1"/>
    <property type="molecule type" value="mRNA"/>
</dbReference>
<dbReference type="EMBL" id="AY063047">
    <property type="protein sequence ID" value="AAL34221.1"/>
    <property type="molecule type" value="mRNA"/>
</dbReference>
<dbReference type="PIR" id="G71435">
    <property type="entry name" value="G71435"/>
</dbReference>
<dbReference type="RefSeq" id="NP_567517.1">
    <molecule id="Q8W5B1-1"/>
    <property type="nucleotide sequence ID" value="NM_117787.4"/>
</dbReference>
<dbReference type="BioGRID" id="12685">
    <property type="interactions" value="8"/>
</dbReference>
<dbReference type="DIP" id="DIP-48610N"/>
<dbReference type="FunCoup" id="Q8W5B1">
    <property type="interactions" value="159"/>
</dbReference>
<dbReference type="IntAct" id="Q8W5B1">
    <property type="interactions" value="8"/>
</dbReference>
<dbReference type="STRING" id="3702.Q8W5B1"/>
<dbReference type="PaxDb" id="3702-AT4G16845.1"/>
<dbReference type="ProteomicsDB" id="242332">
    <molecule id="Q8W5B1-1"/>
</dbReference>
<dbReference type="EnsemblPlants" id="AT4G16845.1">
    <molecule id="Q8W5B1-1"/>
    <property type="protein sequence ID" value="AT4G16845.1"/>
    <property type="gene ID" value="AT4G16845"/>
</dbReference>
<dbReference type="GeneID" id="827392"/>
<dbReference type="Gramene" id="AT4G16845.1">
    <molecule id="Q8W5B1-1"/>
    <property type="protein sequence ID" value="AT4G16845.1"/>
    <property type="gene ID" value="AT4G16845"/>
</dbReference>
<dbReference type="KEGG" id="ath:AT4G16845"/>
<dbReference type="Araport" id="AT4G16845"/>
<dbReference type="TAIR" id="AT4G16845">
    <property type="gene designation" value="VRN2"/>
</dbReference>
<dbReference type="eggNOG" id="KOG2350">
    <property type="taxonomic scope" value="Eukaryota"/>
</dbReference>
<dbReference type="eggNOG" id="KOG4197">
    <property type="taxonomic scope" value="Eukaryota"/>
</dbReference>
<dbReference type="HOGENOM" id="CLU_047065_0_0_1"/>
<dbReference type="InParanoid" id="Q8W5B1"/>
<dbReference type="OMA" id="FAMHENG"/>
<dbReference type="PhylomeDB" id="Q8W5B1"/>
<dbReference type="PRO" id="PR:Q8W5B1"/>
<dbReference type="Proteomes" id="UP000006548">
    <property type="component" value="Chromosome 4"/>
</dbReference>
<dbReference type="ExpressionAtlas" id="Q8W5B1">
    <property type="expression patterns" value="baseline and differential"/>
</dbReference>
<dbReference type="GO" id="GO:0005677">
    <property type="term" value="C:chromatin silencing complex"/>
    <property type="evidence" value="ECO:0000314"/>
    <property type="project" value="UniProtKB"/>
</dbReference>
<dbReference type="GO" id="GO:0005634">
    <property type="term" value="C:nucleus"/>
    <property type="evidence" value="ECO:0000314"/>
    <property type="project" value="TAIR"/>
</dbReference>
<dbReference type="GO" id="GO:0003700">
    <property type="term" value="F:DNA-binding transcription factor activity"/>
    <property type="evidence" value="ECO:0000250"/>
    <property type="project" value="TAIR"/>
</dbReference>
<dbReference type="GO" id="GO:0008270">
    <property type="term" value="F:zinc ion binding"/>
    <property type="evidence" value="ECO:0007669"/>
    <property type="project" value="UniProtKB-KW"/>
</dbReference>
<dbReference type="GO" id="GO:0009409">
    <property type="term" value="P:response to cold"/>
    <property type="evidence" value="ECO:0000270"/>
    <property type="project" value="TAIR"/>
</dbReference>
<dbReference type="GO" id="GO:0010048">
    <property type="term" value="P:vernalization response"/>
    <property type="evidence" value="ECO:0000315"/>
    <property type="project" value="TAIR"/>
</dbReference>
<dbReference type="CDD" id="cd21553">
    <property type="entry name" value="VEFS-box_EMF2-like"/>
    <property type="match status" value="1"/>
</dbReference>
<dbReference type="CDD" id="cd21749">
    <property type="entry name" value="ZnB-Zn_EMF2-like"/>
    <property type="match status" value="1"/>
</dbReference>
<dbReference type="InterPro" id="IPR019135">
    <property type="entry name" value="Polycomb_protein_VEFS-Box"/>
</dbReference>
<dbReference type="PANTHER" id="PTHR22597">
    <property type="entry name" value="POLYCOMB GROUP PROTEIN"/>
    <property type="match status" value="1"/>
</dbReference>
<dbReference type="PANTHER" id="PTHR22597:SF12">
    <property type="entry name" value="POLYCOMB GROUP PROTEIN VERNALIZATION 2"/>
    <property type="match status" value="1"/>
</dbReference>
<dbReference type="Pfam" id="PF09733">
    <property type="entry name" value="VEFS-Box"/>
    <property type="match status" value="1"/>
</dbReference>
<dbReference type="Pfam" id="PF23320">
    <property type="entry name" value="Zn_SUZ12"/>
    <property type="match status" value="1"/>
</dbReference>
<dbReference type="PROSITE" id="PS00028">
    <property type="entry name" value="ZINC_FINGER_C2H2_1"/>
    <property type="match status" value="1"/>
</dbReference>
<accession>Q8W5B1</accession>
<accession>O23524</accession>
<accession>O23525</accession>
<accession>Q8W5B2</accession>
<accession>Q94CF5</accession>
<feature type="chain" id="PRO_0000047841" description="Polycomb group protein VERNALIZATION 2">
    <location>
        <begin position="1"/>
        <end position="440"/>
    </location>
</feature>
<feature type="zinc finger region" description="C2H2-type">
    <location>
        <begin position="86"/>
        <end position="111"/>
    </location>
</feature>
<feature type="region of interest" description="VEFS-box">
    <location>
        <begin position="267"/>
        <end position="345"/>
    </location>
</feature>
<feature type="region of interest" description="Disordered" evidence="3">
    <location>
        <begin position="398"/>
        <end position="440"/>
    </location>
</feature>
<feature type="short sequence motif" description="Nuclear localization signal" evidence="2">
    <location>
        <begin position="156"/>
        <end position="163"/>
    </location>
</feature>
<feature type="compositionally biased region" description="Basic and acidic residues" evidence="3">
    <location>
        <begin position="420"/>
        <end position="440"/>
    </location>
</feature>
<feature type="splice variant" id="VSP_007457" description="In isoform 2." evidence="7">
    <original>GLQFHL</original>
    <variation>VGNYYN</variation>
    <location>
        <begin position="102"/>
        <end position="107"/>
    </location>
</feature>
<feature type="splice variant" id="VSP_007458" description="In isoform 2." evidence="7">
    <location>
        <begin position="108"/>
        <end position="440"/>
    </location>
</feature>
<feature type="sequence conflict" description="In Ref. 1; AAL32135/AAL32136." evidence="8" ref="1">
    <original>R</original>
    <variation>K</variation>
    <location>
        <position position="81"/>
    </location>
</feature>
<feature type="sequence conflict" description="In Ref. 1; AAL32135." evidence="8" ref="1">
    <original>L</original>
    <variation>S</variation>
    <location>
        <position position="121"/>
    </location>
</feature>
<feature type="sequence conflict" description="In Ref. 1; AAL32135." evidence="8" ref="1">
    <original>A</original>
    <variation>T</variation>
    <location>
        <position position="185"/>
    </location>
</feature>
<feature type="sequence conflict" description="In Ref. 1; AAL32135." evidence="8" ref="1">
    <original>A</original>
    <variation>T</variation>
    <location>
        <position position="193"/>
    </location>
</feature>
<feature type="sequence conflict" description="In Ref. 1; AAL32135." evidence="8" ref="1">
    <original>T</original>
    <variation>S</variation>
    <location>
        <position position="239"/>
    </location>
</feature>
<feature type="sequence conflict" description="In Ref. 1; AAL32135." evidence="8" ref="1">
    <original>V</original>
    <variation>A</variation>
    <location>
        <position position="344"/>
    </location>
</feature>
<feature type="sequence conflict" description="In Ref. 1; AAL32135." evidence="8" ref="1">
    <original>C</original>
    <variation>R</variation>
    <location>
        <position position="355"/>
    </location>
</feature>
<feature type="sequence conflict" description="In Ref. 1; AAL32135." evidence="8" ref="1">
    <original>TSVTN</original>
    <variation>SSDTTTT</variation>
    <location>
        <begin position="394"/>
        <end position="398"/>
    </location>
</feature>
<feature type="sequence conflict" description="In Ref. 1; AAL32135." evidence="8" ref="1">
    <original>H</original>
    <variation>R</variation>
    <location>
        <position position="406"/>
    </location>
</feature>
<feature type="sequence conflict" description="In Ref. 1; AAL32135." evidence="8" ref="1">
    <original>K</original>
    <variation>N</variation>
    <location>
        <position position="425"/>
    </location>
</feature>
<feature type="sequence conflict" description="In Ref. 1; AAL32135." evidence="8" ref="1">
    <original>K</original>
    <variation>KVIK</variation>
    <location>
        <position position="440"/>
    </location>
</feature>
<proteinExistence type="evidence at protein level"/>
<protein>
    <recommendedName>
        <fullName>Polycomb group protein VERNALIZATION 2</fullName>
    </recommendedName>
</protein>
<keyword id="KW-0025">Alternative splicing</keyword>
<keyword id="KW-0479">Metal-binding</keyword>
<keyword id="KW-0539">Nucleus</keyword>
<keyword id="KW-1185">Reference proteome</keyword>
<keyword id="KW-0678">Repressor</keyword>
<keyword id="KW-0804">Transcription</keyword>
<keyword id="KW-0805">Transcription regulation</keyword>
<keyword id="KW-0862">Zinc</keyword>
<keyword id="KW-0863">Zinc-finger</keyword>
<sequence length="440" mass="50624">MCRQNCRAKSSPEEVISTDENLLIYCKPVRLYNIFHLRSLGNPSFLPRCLNYKIGAKRKRKSRSTGMVVFNYKDCNNTLQRTEVREDCSCPFCSMLCGSFKGLQFHLNSSHDLFEFEFKLLEEYQTVNVSVKLNSFIFEEEGSDDDKFEPFSLCSKPRKRRQRGGRNNTRRLKVCFLPLDSPSLANGTENGIALLNDGNRGLGYPEATELAGQFEMTSNIPPAIAHSSLDAGAKVILTTEAVVPATKTRKLSAERSEARSHLLLQKRQFYHSHRVQPMALEQVMSDRDSEDEVDDDVADFEDRQMLDDFVDVNKDEKQFMHLWNSFVRKQRVIADGHISWACEVFSRFYEKELHCYSSLFWCWRLFLIKLWNHGLVDSATINNCNTILENCRNTSVTNNNNNSVDHPSDSNTNNNNIVDHPNDIKNKNNVDNKDNNSRDK</sequence>